<organism>
    <name type="scientific">Xenopus laevis</name>
    <name type="common">African clawed frog</name>
    <dbReference type="NCBI Taxonomy" id="8355"/>
    <lineage>
        <taxon>Eukaryota</taxon>
        <taxon>Metazoa</taxon>
        <taxon>Chordata</taxon>
        <taxon>Craniata</taxon>
        <taxon>Vertebrata</taxon>
        <taxon>Euteleostomi</taxon>
        <taxon>Amphibia</taxon>
        <taxon>Batrachia</taxon>
        <taxon>Anura</taxon>
        <taxon>Pipoidea</taxon>
        <taxon>Pipidae</taxon>
        <taxon>Xenopodinae</taxon>
        <taxon>Xenopus</taxon>
        <taxon>Xenopus</taxon>
    </lineage>
</organism>
<keyword id="KW-1185">Reference proteome</keyword>
<feature type="chain" id="PRO_0000263662" description="Small acidic protein">
    <location>
        <begin position="1"/>
        <end position="188"/>
    </location>
</feature>
<feature type="region of interest" description="Disordered" evidence="1">
    <location>
        <begin position="1"/>
        <end position="188"/>
    </location>
</feature>
<feature type="compositionally biased region" description="Basic and acidic residues" evidence="1">
    <location>
        <begin position="49"/>
        <end position="82"/>
    </location>
</feature>
<feature type="compositionally biased region" description="Polar residues" evidence="1">
    <location>
        <begin position="83"/>
        <end position="95"/>
    </location>
</feature>
<feature type="compositionally biased region" description="Acidic residues" evidence="1">
    <location>
        <begin position="130"/>
        <end position="152"/>
    </location>
</feature>
<feature type="compositionally biased region" description="Basic and acidic residues" evidence="1">
    <location>
        <begin position="153"/>
        <end position="176"/>
    </location>
</feature>
<proteinExistence type="evidence at transcript level"/>
<gene>
    <name type="primary">smap</name>
</gene>
<protein>
    <recommendedName>
        <fullName>Small acidic protein</fullName>
    </recommendedName>
</protein>
<comment type="similarity">
    <text evidence="2">Belongs to the SMAP family.</text>
</comment>
<reference key="1">
    <citation type="submission" date="2004-07" db="EMBL/GenBank/DDBJ databases">
        <authorList>
            <consortium name="NIH - Xenopus Gene Collection (XGC) project"/>
        </authorList>
    </citation>
    <scope>NUCLEOTIDE SEQUENCE [LARGE SCALE MRNA]</scope>
    <source>
        <tissue>Embryo</tissue>
    </source>
</reference>
<accession>Q6DDU5</accession>
<sequence>MSAREERYQRGSKRPAARRENESDNGSWEQADLGNEERKQKFLRLMGAGKKEHTGRLVIGDHKSTSHFRSGVEDKKISDQLEHQYQQSMDSSMSGRNRRHCGLGFSESETTQEKAPPPPPEHPPERESESESSNEVSSEEESESESVSEEETAADKQKPTKPNEKDSFPDSRDGKSNYKMLFVKSTGS</sequence>
<name>SMAP_XENLA</name>
<dbReference type="EMBL" id="BC077413">
    <property type="protein sequence ID" value="AAH77413.1"/>
    <property type="molecule type" value="mRNA"/>
</dbReference>
<dbReference type="RefSeq" id="NP_001086765.1">
    <property type="nucleotide sequence ID" value="NM_001093296.1"/>
</dbReference>
<dbReference type="DNASU" id="446600"/>
<dbReference type="GeneID" id="446600"/>
<dbReference type="KEGG" id="xla:446600"/>
<dbReference type="AGR" id="Xenbase:XB-GENE-17332590"/>
<dbReference type="CTD" id="446600"/>
<dbReference type="Xenbase" id="XB-GENE-17332590">
    <property type="gene designation" value="c4h11orf58.S"/>
</dbReference>
<dbReference type="OMA" id="HHGRFVI"/>
<dbReference type="OrthoDB" id="10066125at2759"/>
<dbReference type="Proteomes" id="UP000186698">
    <property type="component" value="Chromosome 4S"/>
</dbReference>
<dbReference type="Bgee" id="446600">
    <property type="expression patterns" value="Expressed in oocyte and 19 other cell types or tissues"/>
</dbReference>
<dbReference type="InterPro" id="IPR026714">
    <property type="entry name" value="SMAP"/>
</dbReference>
<dbReference type="InterPro" id="IPR028124">
    <property type="entry name" value="SMAP_dom"/>
</dbReference>
<dbReference type="PANTHER" id="PTHR22175:SF0">
    <property type="entry name" value="SMALL ACIDIC PROTEIN"/>
    <property type="match status" value="1"/>
</dbReference>
<dbReference type="PANTHER" id="PTHR22175">
    <property type="entry name" value="SMALL ACIDIC PROTEIN-RELATED"/>
    <property type="match status" value="1"/>
</dbReference>
<dbReference type="Pfam" id="PF15477">
    <property type="entry name" value="SMAP"/>
    <property type="match status" value="1"/>
</dbReference>
<evidence type="ECO:0000256" key="1">
    <source>
        <dbReference type="SAM" id="MobiDB-lite"/>
    </source>
</evidence>
<evidence type="ECO:0000305" key="2"/>